<sequence>MALASGVTFAGYTVVRMLGCSAMGEVYLVQHPGFPGWQALKVLSPAMAADDEFRRRFQRETEVAARLFHPHILEVHDRGEFDGQLWIAMDYVDGIDATQHMADRFPAVLPVGEVLAIVTAVAGALDYAHQRGLLHRDVNPANVVLTSQSAGDQRILLADFGIASQPSYPAPELSAGADVDGRADQYALALTAIHLFAGAPPVDRSHTGPLQPPKLSAFRPDLARLDGVLSRALATAPADRFGSCREFADAMNEQAGVAIADQSSGGVDASEVTAAAGEEAYVVDYPAYGWPEAVDCKEPSARAPAPAAPTPQRRGSMLQSAAGVLARRLDNFSTATKAPASPTRRRPRRILVGAVAVLLLAGLFAVGIVIGRKTNTTATEVARPPTSGSAVPSAPTTTVAVTAPVPLDGTYRIEIQRSKQTYDYTPTPQPPDVNTWWAFRTSCTPTECLAAATMLDDNDHTQAKTPPVRPFLMQFGEGQWKSRPETVQFPCVGPNGSPSTQATTQLLALRPQPQGDLVGEMVVTVHSNECGQQGAVIRIPAVASRSGDLPPAVTVPDPATIPDTPDTTSTATLTPPTTTAPGPGR</sequence>
<keyword id="KW-0067">ATP-binding</keyword>
<keyword id="KW-1003">Cell membrane</keyword>
<keyword id="KW-0963">Cytoplasm</keyword>
<keyword id="KW-0418">Kinase</keyword>
<keyword id="KW-0472">Membrane</keyword>
<keyword id="KW-0547">Nucleotide-binding</keyword>
<keyword id="KW-1185">Reference proteome</keyword>
<keyword id="KW-0723">Serine/threonine-protein kinase</keyword>
<keyword id="KW-0808">Transferase</keyword>
<keyword id="KW-0812">Transmembrane</keyword>
<keyword id="KW-1133">Transmembrane helix</keyword>
<keyword id="KW-0843">Virulence</keyword>
<gene>
    <name type="primary">pknI</name>
    <name type="ordered locus">MT2982</name>
</gene>
<dbReference type="EC" id="2.7.11.1" evidence="1"/>
<dbReference type="EMBL" id="AE000516">
    <property type="protein sequence ID" value="AAK47308.1"/>
    <property type="status" value="ALT_INIT"/>
    <property type="molecule type" value="Genomic_DNA"/>
</dbReference>
<dbReference type="PIR" id="B70747">
    <property type="entry name" value="B70747"/>
</dbReference>
<dbReference type="RefSeq" id="WP_003900593.1">
    <property type="nucleotide sequence ID" value="NZ_KK341227.1"/>
</dbReference>
<dbReference type="SMR" id="P9WI68"/>
<dbReference type="GeneID" id="45426901"/>
<dbReference type="KEGG" id="mtc:MT2982"/>
<dbReference type="PATRIC" id="fig|83331.31.peg.3222"/>
<dbReference type="HOGENOM" id="CLU_000288_63_44_11"/>
<dbReference type="Proteomes" id="UP000001020">
    <property type="component" value="Chromosome"/>
</dbReference>
<dbReference type="GO" id="GO:0005737">
    <property type="term" value="C:cytoplasm"/>
    <property type="evidence" value="ECO:0007669"/>
    <property type="project" value="UniProtKB-SubCell"/>
</dbReference>
<dbReference type="GO" id="GO:0005886">
    <property type="term" value="C:plasma membrane"/>
    <property type="evidence" value="ECO:0007669"/>
    <property type="project" value="UniProtKB-SubCell"/>
</dbReference>
<dbReference type="GO" id="GO:0005524">
    <property type="term" value="F:ATP binding"/>
    <property type="evidence" value="ECO:0007669"/>
    <property type="project" value="UniProtKB-KW"/>
</dbReference>
<dbReference type="GO" id="GO:0106310">
    <property type="term" value="F:protein serine kinase activity"/>
    <property type="evidence" value="ECO:0007669"/>
    <property type="project" value="RHEA"/>
</dbReference>
<dbReference type="GO" id="GO:0004674">
    <property type="term" value="F:protein serine/threonine kinase activity"/>
    <property type="evidence" value="ECO:0007669"/>
    <property type="project" value="UniProtKB-KW"/>
</dbReference>
<dbReference type="CDD" id="cd14014">
    <property type="entry name" value="STKc_PknB_like"/>
    <property type="match status" value="1"/>
</dbReference>
<dbReference type="FunFam" id="3.30.200.20:FF:000035">
    <property type="entry name" value="Serine/threonine protein kinase Stk1"/>
    <property type="match status" value="1"/>
</dbReference>
<dbReference type="Gene3D" id="3.30.200.20">
    <property type="entry name" value="Phosphorylase Kinase, domain 1"/>
    <property type="match status" value="1"/>
</dbReference>
<dbReference type="Gene3D" id="1.10.510.10">
    <property type="entry name" value="Transferase(Phosphotransferase) domain 1"/>
    <property type="match status" value="1"/>
</dbReference>
<dbReference type="InterPro" id="IPR011009">
    <property type="entry name" value="Kinase-like_dom_sf"/>
</dbReference>
<dbReference type="InterPro" id="IPR000719">
    <property type="entry name" value="Prot_kinase_dom"/>
</dbReference>
<dbReference type="PANTHER" id="PTHR43289">
    <property type="entry name" value="MITOGEN-ACTIVATED PROTEIN KINASE KINASE KINASE 20-RELATED"/>
    <property type="match status" value="1"/>
</dbReference>
<dbReference type="PANTHER" id="PTHR43289:SF6">
    <property type="entry name" value="SERINE_THREONINE-PROTEIN KINASE NEKL-3"/>
    <property type="match status" value="1"/>
</dbReference>
<dbReference type="Pfam" id="PF00069">
    <property type="entry name" value="Pkinase"/>
    <property type="match status" value="1"/>
</dbReference>
<dbReference type="SUPFAM" id="SSF56112">
    <property type="entry name" value="Protein kinase-like (PK-like)"/>
    <property type="match status" value="1"/>
</dbReference>
<dbReference type="PROSITE" id="PS50011">
    <property type="entry name" value="PROTEIN_KINASE_DOM"/>
    <property type="match status" value="1"/>
</dbReference>
<evidence type="ECO:0000250" key="1">
    <source>
        <dbReference type="UniProtKB" id="P9WI69"/>
    </source>
</evidence>
<evidence type="ECO:0000255" key="2"/>
<evidence type="ECO:0000255" key="3">
    <source>
        <dbReference type="PROSITE-ProRule" id="PRU00159"/>
    </source>
</evidence>
<evidence type="ECO:0000256" key="4">
    <source>
        <dbReference type="SAM" id="MobiDB-lite"/>
    </source>
</evidence>
<evidence type="ECO:0000305" key="5"/>
<reference key="1">
    <citation type="journal article" date="2002" name="J. Bacteriol.">
        <title>Whole-genome comparison of Mycobacterium tuberculosis clinical and laboratory strains.</title>
        <authorList>
            <person name="Fleischmann R.D."/>
            <person name="Alland D."/>
            <person name="Eisen J.A."/>
            <person name="Carpenter L."/>
            <person name="White O."/>
            <person name="Peterson J.D."/>
            <person name="DeBoy R.T."/>
            <person name="Dodson R.J."/>
            <person name="Gwinn M.L."/>
            <person name="Haft D.H."/>
            <person name="Hickey E.K."/>
            <person name="Kolonay J.F."/>
            <person name="Nelson W.C."/>
            <person name="Umayam L.A."/>
            <person name="Ermolaeva M.D."/>
            <person name="Salzberg S.L."/>
            <person name="Delcher A."/>
            <person name="Utterback T.R."/>
            <person name="Weidman J.F."/>
            <person name="Khouri H.M."/>
            <person name="Gill J."/>
            <person name="Mikula A."/>
            <person name="Bishai W."/>
            <person name="Jacobs W.R. Jr."/>
            <person name="Venter J.C."/>
            <person name="Fraser C.M."/>
        </authorList>
    </citation>
    <scope>NUCLEOTIDE SEQUENCE [LARGE SCALE GENOMIC DNA]</scope>
    <source>
        <strain>CDC 1551 / Oshkosh</strain>
    </source>
</reference>
<name>PKNI_MYCTO</name>
<feature type="chain" id="PRO_0000428059" description="Serine/threonine-protein kinase PknI">
    <location>
        <begin position="1"/>
        <end position="585"/>
    </location>
</feature>
<feature type="topological domain" description="Cytoplasmic" evidence="1">
    <location>
        <begin position="1"/>
        <end position="349"/>
    </location>
</feature>
<feature type="transmembrane region" description="Helical" evidence="2">
    <location>
        <begin position="350"/>
        <end position="370"/>
    </location>
</feature>
<feature type="topological domain" description="Extracellular" evidence="1">
    <location>
        <begin position="371"/>
        <end position="585"/>
    </location>
</feature>
<feature type="domain" description="Protein kinase" evidence="3">
    <location>
        <begin position="12"/>
        <end position="252"/>
    </location>
</feature>
<feature type="region of interest" description="Disordered" evidence="4">
    <location>
        <begin position="546"/>
        <end position="585"/>
    </location>
</feature>
<feature type="compositionally biased region" description="Low complexity" evidence="4">
    <location>
        <begin position="554"/>
        <end position="585"/>
    </location>
</feature>
<feature type="active site" description="Proton acceptor" evidence="3">
    <location>
        <position position="137"/>
    </location>
</feature>
<feature type="binding site" evidence="3">
    <location>
        <begin position="18"/>
        <end position="26"/>
    </location>
    <ligand>
        <name>ATP</name>
        <dbReference type="ChEBI" id="CHEBI:30616"/>
    </ligand>
</feature>
<feature type="binding site" evidence="1">
    <location>
        <position position="41"/>
    </location>
    <ligand>
        <name>ADP</name>
        <dbReference type="ChEBI" id="CHEBI:456216"/>
    </ligand>
</feature>
<feature type="binding site" evidence="3">
    <location>
        <position position="41"/>
    </location>
    <ligand>
        <name>ATP</name>
        <dbReference type="ChEBI" id="CHEBI:30616"/>
    </ligand>
</feature>
<feature type="binding site" evidence="1">
    <location>
        <position position="90"/>
    </location>
    <ligand>
        <name>ADP</name>
        <dbReference type="ChEBI" id="CHEBI:456216"/>
    </ligand>
</feature>
<feature type="binding site" evidence="1">
    <location>
        <position position="92"/>
    </location>
    <ligand>
        <name>ADP</name>
        <dbReference type="ChEBI" id="CHEBI:456216"/>
    </ligand>
</feature>
<organism>
    <name type="scientific">Mycobacterium tuberculosis (strain CDC 1551 / Oshkosh)</name>
    <dbReference type="NCBI Taxonomy" id="83331"/>
    <lineage>
        <taxon>Bacteria</taxon>
        <taxon>Bacillati</taxon>
        <taxon>Actinomycetota</taxon>
        <taxon>Actinomycetes</taxon>
        <taxon>Mycobacteriales</taxon>
        <taxon>Mycobacteriaceae</taxon>
        <taxon>Mycobacterium</taxon>
        <taxon>Mycobacterium tuberculosis complex</taxon>
    </lineage>
</organism>
<accession>P9WI68</accession>
<accession>L0TB90</accession>
<accession>P65730</accession>
<accession>Q10964</accession>
<proteinExistence type="inferred from homology"/>
<protein>
    <recommendedName>
        <fullName evidence="1">Serine/threonine-protein kinase PknI</fullName>
        <ecNumber evidence="1">2.7.11.1</ecNumber>
    </recommendedName>
</protein>
<comment type="function">
    <text evidence="1">Plays an important role in slowing down the growth of mycobacteria within the infected host.</text>
</comment>
<comment type="catalytic activity">
    <reaction evidence="1">
        <text>L-seryl-[protein] + ATP = O-phospho-L-seryl-[protein] + ADP + H(+)</text>
        <dbReference type="Rhea" id="RHEA:17989"/>
        <dbReference type="Rhea" id="RHEA-COMP:9863"/>
        <dbReference type="Rhea" id="RHEA-COMP:11604"/>
        <dbReference type="ChEBI" id="CHEBI:15378"/>
        <dbReference type="ChEBI" id="CHEBI:29999"/>
        <dbReference type="ChEBI" id="CHEBI:30616"/>
        <dbReference type="ChEBI" id="CHEBI:83421"/>
        <dbReference type="ChEBI" id="CHEBI:456216"/>
        <dbReference type="EC" id="2.7.11.1"/>
    </reaction>
</comment>
<comment type="catalytic activity">
    <reaction evidence="1">
        <text>L-threonyl-[protein] + ATP = O-phospho-L-threonyl-[protein] + ADP + H(+)</text>
        <dbReference type="Rhea" id="RHEA:46608"/>
        <dbReference type="Rhea" id="RHEA-COMP:11060"/>
        <dbReference type="Rhea" id="RHEA-COMP:11605"/>
        <dbReference type="ChEBI" id="CHEBI:15378"/>
        <dbReference type="ChEBI" id="CHEBI:30013"/>
        <dbReference type="ChEBI" id="CHEBI:30616"/>
        <dbReference type="ChEBI" id="CHEBI:61977"/>
        <dbReference type="ChEBI" id="CHEBI:456216"/>
        <dbReference type="EC" id="2.7.11.1"/>
    </reaction>
</comment>
<comment type="cofactor">
    <cofactor evidence="1">
        <name>Mn(2+)</name>
        <dbReference type="ChEBI" id="CHEBI:29035"/>
    </cofactor>
</comment>
<comment type="subcellular location">
    <subcellularLocation>
        <location evidence="1">Cytoplasm</location>
    </subcellularLocation>
    <subcellularLocation>
        <location evidence="1">Cell membrane</location>
        <topology evidence="2">Single-pass membrane protein</topology>
    </subcellularLocation>
</comment>
<comment type="PTM">
    <text evidence="1">Autophosphorylated at serine and threonine residues.</text>
</comment>
<comment type="similarity">
    <text evidence="3">Belongs to the protein kinase superfamily. Ser/Thr protein kinase family.</text>
</comment>
<comment type="sequence caution" evidence="5">
    <conflict type="erroneous initiation">
        <sequence resource="EMBL-CDS" id="AAK47308"/>
    </conflict>
    <text>Extended N-terminus.</text>
</comment>